<sequence>MIGDGKLLASAAWDAQSLNELKAKAGQDPAANIRPVARQVEGMFVQMMLKSMREALPKDGLFSSDQTRLYTSMYDQQIAQQMTAGKGLGLADMMVKQMTSGQTMPADDAPQVPLKFSLETVNSYQNQALTQLVRKAIPKTPDSSDAPLSGDSKDFLARLSLPARLASEQSGVPHHLILAQAALESGWGQRQILRENGEPSYNVFGVKATASWKGPVTEITTTEYENGEAKKVKAKFRVYSSYLEALSDYVALLTRNPRYAAVTTAATAEQGAVALQNAGYATDPNYARKLTSMIQQLKAMSEKVSKTYSANLDNLF</sequence>
<name>FLGJ_SALTY</name>
<reference key="1">
    <citation type="journal article" date="1989" name="J. Bacteriol.">
        <title>L-, P-, and M-ring proteins of the flagellar basal body of Salmonella typhimurium: gene sequences and deduced protein sequences.</title>
        <authorList>
            <person name="Jones C.J."/>
            <person name="Homma M."/>
            <person name="Macnab R.M."/>
        </authorList>
    </citation>
    <scope>NUCLEOTIDE SEQUENCE [GENOMIC DNA]</scope>
</reference>
<reference key="2">
    <citation type="journal article" date="2001" name="Nature">
        <title>Complete genome sequence of Salmonella enterica serovar Typhimurium LT2.</title>
        <authorList>
            <person name="McClelland M."/>
            <person name="Sanderson K.E."/>
            <person name="Spieth J."/>
            <person name="Clifton S.W."/>
            <person name="Latreille P."/>
            <person name="Courtney L."/>
            <person name="Porwollik S."/>
            <person name="Ali J."/>
            <person name="Dante M."/>
            <person name="Du F."/>
            <person name="Hou S."/>
            <person name="Layman D."/>
            <person name="Leonard S."/>
            <person name="Nguyen C."/>
            <person name="Scott K."/>
            <person name="Holmes A."/>
            <person name="Grewal N."/>
            <person name="Mulvaney E."/>
            <person name="Ryan E."/>
            <person name="Sun H."/>
            <person name="Florea L."/>
            <person name="Miller W."/>
            <person name="Stoneking T."/>
            <person name="Nhan M."/>
            <person name="Waterston R."/>
            <person name="Wilson R.K."/>
        </authorList>
    </citation>
    <scope>NUCLEOTIDE SEQUENCE [LARGE SCALE GENOMIC DNA]</scope>
    <source>
        <strain>LT2 / SGSC1412 / ATCC 700720</strain>
    </source>
</reference>
<reference key="3">
    <citation type="journal article" date="1990" name="J. Mol. Biol.">
        <title>Flagellar hook and hook-associated proteins of Salmonella typhimurium and their relationship to other axial components of the flagellum.</title>
        <authorList>
            <person name="Homma M."/>
            <person name="Derosier D.J."/>
            <person name="Macnab R.M."/>
        </authorList>
    </citation>
    <scope>NUCLEOTIDE SEQUENCE [GENOMIC DNA] OF 313-316</scope>
</reference>
<reference key="4">
    <citation type="journal article" date="1999" name="J. Bacteriol.">
        <title>Peptidoglycan-hydrolyzing activity of the FlgJ protein, essential for flagellar rod formation in Salmonella typhimurium.</title>
        <authorList>
            <person name="Nambu T."/>
            <person name="Minamino T."/>
            <person name="Macnab R.M."/>
            <person name="Kutsukake K."/>
        </authorList>
    </citation>
    <scope>FUNCTION</scope>
    <scope>MUTAGENESIS OF GLU-223 AND ASP-248</scope>
</reference>
<organism>
    <name type="scientific">Salmonella typhimurium (strain LT2 / SGSC1412 / ATCC 700720)</name>
    <dbReference type="NCBI Taxonomy" id="99287"/>
    <lineage>
        <taxon>Bacteria</taxon>
        <taxon>Pseudomonadati</taxon>
        <taxon>Pseudomonadota</taxon>
        <taxon>Gammaproteobacteria</taxon>
        <taxon>Enterobacterales</taxon>
        <taxon>Enterobacteriaceae</taxon>
        <taxon>Salmonella</taxon>
    </lineage>
</organism>
<dbReference type="EC" id="3.2.1.-"/>
<dbReference type="EMBL" id="M24466">
    <property type="protein sequence ID" value="AAA27070.1"/>
    <property type="molecule type" value="Genomic_DNA"/>
</dbReference>
<dbReference type="EMBL" id="AE006468">
    <property type="protein sequence ID" value="AAL20112.1"/>
    <property type="molecule type" value="Genomic_DNA"/>
</dbReference>
<dbReference type="EMBL" id="X51738">
    <property type="protein sequence ID" value="CAA36024.1"/>
    <property type="molecule type" value="Genomic_DNA"/>
</dbReference>
<dbReference type="PIR" id="D32887">
    <property type="entry name" value="C30930"/>
</dbReference>
<dbReference type="RefSeq" id="NP_460153.1">
    <property type="nucleotide sequence ID" value="NC_003197.2"/>
</dbReference>
<dbReference type="RefSeq" id="WP_000578692.1">
    <property type="nucleotide sequence ID" value="NC_003197.2"/>
</dbReference>
<dbReference type="PDB" id="5DN4">
    <property type="method" value="X-ray"/>
    <property type="resolution" value="1.80 A"/>
    <property type="chains" value="A=151-316"/>
</dbReference>
<dbReference type="PDB" id="5DN5">
    <property type="method" value="X-ray"/>
    <property type="resolution" value="2.15 A"/>
    <property type="chains" value="A/B/C=151-301"/>
</dbReference>
<dbReference type="PDBsum" id="5DN4"/>
<dbReference type="PDBsum" id="5DN5"/>
<dbReference type="SMR" id="P15931"/>
<dbReference type="STRING" id="99287.STM1182"/>
<dbReference type="CAZy" id="GH73">
    <property type="family name" value="Glycoside Hydrolase Family 73"/>
</dbReference>
<dbReference type="PaxDb" id="99287-STM1182"/>
<dbReference type="GeneID" id="1252700"/>
<dbReference type="KEGG" id="stm:STM1182"/>
<dbReference type="PATRIC" id="fig|99287.12.peg.1250"/>
<dbReference type="HOGENOM" id="CLU_013771_3_0_6"/>
<dbReference type="OMA" id="GHETGWG"/>
<dbReference type="PhylomeDB" id="P15931"/>
<dbReference type="BioCyc" id="MetaCyc:STM1182-MONOMER"/>
<dbReference type="BioCyc" id="SENT99287:STM1182-MONOMER"/>
<dbReference type="EvolutionaryTrace" id="P15931"/>
<dbReference type="Proteomes" id="UP000001014">
    <property type="component" value="Chromosome"/>
</dbReference>
<dbReference type="GO" id="GO:0042597">
    <property type="term" value="C:periplasmic space"/>
    <property type="evidence" value="ECO:0007669"/>
    <property type="project" value="UniProtKB-SubCell"/>
</dbReference>
<dbReference type="GO" id="GO:0004040">
    <property type="term" value="F:amidase activity"/>
    <property type="evidence" value="ECO:0007669"/>
    <property type="project" value="InterPro"/>
</dbReference>
<dbReference type="GO" id="GO:0016798">
    <property type="term" value="F:hydrolase activity, acting on glycosyl bonds"/>
    <property type="evidence" value="ECO:0007669"/>
    <property type="project" value="UniProtKB-KW"/>
</dbReference>
<dbReference type="GO" id="GO:0044780">
    <property type="term" value="P:bacterial-type flagellum assembly"/>
    <property type="evidence" value="ECO:0007669"/>
    <property type="project" value="InterPro"/>
</dbReference>
<dbReference type="GO" id="GO:0071973">
    <property type="term" value="P:bacterial-type flagellum-dependent cell motility"/>
    <property type="evidence" value="ECO:0000318"/>
    <property type="project" value="GO_Central"/>
</dbReference>
<dbReference type="GO" id="GO:0071555">
    <property type="term" value="P:cell wall organization"/>
    <property type="evidence" value="ECO:0007669"/>
    <property type="project" value="UniProtKB-KW"/>
</dbReference>
<dbReference type="FunFam" id="2.10.70.40:FF:000001">
    <property type="entry name" value="Flagellar assembly peptidoglycan hydrolase FlgJ"/>
    <property type="match status" value="1"/>
</dbReference>
<dbReference type="Gene3D" id="1.10.530.10">
    <property type="match status" value="1"/>
</dbReference>
<dbReference type="Gene3D" id="2.10.70.40">
    <property type="entry name" value="peptidoglycan hydrolase"/>
    <property type="match status" value="1"/>
</dbReference>
<dbReference type="InterPro" id="IPR019301">
    <property type="entry name" value="Flagellar_prot_FlgJ_N"/>
</dbReference>
<dbReference type="InterPro" id="IPR013377">
    <property type="entry name" value="FlgJ"/>
</dbReference>
<dbReference type="InterPro" id="IPR051056">
    <property type="entry name" value="Glycosyl_Hydrolase_73"/>
</dbReference>
<dbReference type="InterPro" id="IPR002901">
    <property type="entry name" value="MGlyc_endo_b_GlcNAc-like_dom"/>
</dbReference>
<dbReference type="NCBIfam" id="TIGR02541">
    <property type="entry name" value="flagell_FlgJ"/>
    <property type="match status" value="1"/>
</dbReference>
<dbReference type="PANTHER" id="PTHR33308">
    <property type="entry name" value="PEPTIDOGLYCAN HYDROLASE FLGJ"/>
    <property type="match status" value="1"/>
</dbReference>
<dbReference type="PANTHER" id="PTHR33308:SF9">
    <property type="entry name" value="PEPTIDOGLYCAN HYDROLASE FLGJ"/>
    <property type="match status" value="1"/>
</dbReference>
<dbReference type="Pfam" id="PF01832">
    <property type="entry name" value="Glucosaminidase"/>
    <property type="match status" value="1"/>
</dbReference>
<dbReference type="Pfam" id="PF10135">
    <property type="entry name" value="Rod-binding"/>
    <property type="match status" value="1"/>
</dbReference>
<dbReference type="PRINTS" id="PR01002">
    <property type="entry name" value="FLGFLGJ"/>
</dbReference>
<dbReference type="SMART" id="SM00047">
    <property type="entry name" value="LYZ2"/>
    <property type="match status" value="1"/>
</dbReference>
<feature type="chain" id="PRO_0000165708" description="Peptidoglycan hydrolase FlgJ">
    <location>
        <begin position="1"/>
        <end position="316"/>
    </location>
</feature>
<feature type="region of interest" description="Catalytic">
    <location>
        <begin position="151"/>
        <end position="316"/>
    </location>
</feature>
<feature type="active site" evidence="1">
    <location>
        <position position="223"/>
    </location>
</feature>
<feature type="active site" evidence="1">
    <location>
        <position position="248"/>
    </location>
</feature>
<feature type="mutagenesis site" description="Reduced enzymatic activity and poor motility; strongly reduced enzymatic activity and severely attenuated motility; when associated with N-248." evidence="2">
    <original>E</original>
    <variation>Q</variation>
    <location>
        <position position="223"/>
    </location>
</feature>
<feature type="mutagenesis site" description="Reduced enzymatic activity and poor motility." evidence="2">
    <original>D</original>
    <variation>N</variation>
    <location>
        <position position="248"/>
    </location>
</feature>
<feature type="helix" evidence="4">
    <location>
        <begin position="152"/>
        <end position="170"/>
    </location>
</feature>
<feature type="helix" evidence="4">
    <location>
        <begin position="174"/>
        <end position="185"/>
    </location>
</feature>
<feature type="turn" evidence="4">
    <location>
        <begin position="186"/>
        <end position="189"/>
    </location>
</feature>
<feature type="strand" evidence="4">
    <location>
        <begin position="216"/>
        <end position="221"/>
    </location>
</feature>
<feature type="strand" evidence="4">
    <location>
        <begin position="232"/>
        <end position="237"/>
    </location>
</feature>
<feature type="helix" evidence="4">
    <location>
        <begin position="242"/>
        <end position="255"/>
    </location>
</feature>
<feature type="helix" evidence="4">
    <location>
        <begin position="257"/>
        <end position="259"/>
    </location>
</feature>
<feature type="helix" evidence="4">
    <location>
        <begin position="260"/>
        <end position="263"/>
    </location>
</feature>
<feature type="helix" evidence="4">
    <location>
        <begin position="268"/>
        <end position="278"/>
    </location>
</feature>
<feature type="helix" evidence="5">
    <location>
        <begin position="280"/>
        <end position="282"/>
    </location>
</feature>
<feature type="helix" evidence="4">
    <location>
        <begin position="285"/>
        <end position="312"/>
    </location>
</feature>
<gene>
    <name type="primary">flgJ</name>
    <name type="synonym">fla FX</name>
    <name type="synonym">flaZ</name>
    <name type="ordered locus">STM1182</name>
</gene>
<evidence type="ECO:0000255" key="1"/>
<evidence type="ECO:0000269" key="2">
    <source>
    </source>
</evidence>
<evidence type="ECO:0000305" key="3"/>
<evidence type="ECO:0007829" key="4">
    <source>
        <dbReference type="PDB" id="5DN4"/>
    </source>
</evidence>
<evidence type="ECO:0007829" key="5">
    <source>
        <dbReference type="PDB" id="5DN5"/>
    </source>
</evidence>
<accession>P15931</accession>
<keyword id="KW-0002">3D-structure</keyword>
<keyword id="KW-1005">Bacterial flagellum biogenesis</keyword>
<keyword id="KW-0961">Cell wall biogenesis/degradation</keyword>
<keyword id="KW-0326">Glycosidase</keyword>
<keyword id="KW-0378">Hydrolase</keyword>
<keyword id="KW-0574">Periplasm</keyword>
<keyword id="KW-1185">Reference proteome</keyword>
<comment type="function">
    <text evidence="2">Flagellum-specific muramidase which hydrolyzes the peptidoglycan layer to assemble the rod structure in the periplasmic space.</text>
</comment>
<comment type="subcellular location">
    <subcellularLocation>
        <location>Periplasm</location>
    </subcellularLocation>
</comment>
<comment type="miscellaneous">
    <text>Exported via the flagellum-specific export pathway.</text>
</comment>
<comment type="similarity">
    <text evidence="3">In the N-terminal section; belongs to the FlgJ family.</text>
</comment>
<comment type="similarity">
    <text evidence="3">In the C-terminal section; belongs to the glycosyl hydrolase 73 family.</text>
</comment>
<proteinExistence type="evidence at protein level"/>
<protein>
    <recommendedName>
        <fullName>Peptidoglycan hydrolase FlgJ</fullName>
        <ecNumber>3.2.1.-</ecNumber>
    </recommendedName>
    <alternativeName>
        <fullName>Muramidase FlgJ</fullName>
    </alternativeName>
</protein>